<proteinExistence type="inferred from homology"/>
<keyword id="KW-0997">Cell inner membrane</keyword>
<keyword id="KW-1003">Cell membrane</keyword>
<keyword id="KW-0342">GTP-binding</keyword>
<keyword id="KW-0378">Hydrolase</keyword>
<keyword id="KW-0472">Membrane</keyword>
<keyword id="KW-0547">Nucleotide-binding</keyword>
<keyword id="KW-0648">Protein biosynthesis</keyword>
<evidence type="ECO:0000255" key="1">
    <source>
        <dbReference type="HAMAP-Rule" id="MF_00071"/>
    </source>
</evidence>
<reference key="1">
    <citation type="submission" date="2008-05" db="EMBL/GenBank/DDBJ databases">
        <title>Genome sequence of Helicobacter pylori from the remote Amazon: traces of Asian ancestry of the first Americans.</title>
        <authorList>
            <person name="Kersulyte D."/>
            <person name="Kalia A."/>
            <person name="Gilman R.H."/>
            <person name="Berg D.E."/>
        </authorList>
    </citation>
    <scope>NUCLEOTIDE SEQUENCE [LARGE SCALE GENOMIC DNA]</scope>
    <source>
        <strain>Shi470</strain>
    </source>
</reference>
<feature type="chain" id="PRO_1000092407" description="Elongation factor 4">
    <location>
        <begin position="1"/>
        <end position="602"/>
    </location>
</feature>
<feature type="domain" description="tr-type G">
    <location>
        <begin position="8"/>
        <end position="189"/>
    </location>
</feature>
<feature type="binding site" evidence="1">
    <location>
        <begin position="20"/>
        <end position="25"/>
    </location>
    <ligand>
        <name>GTP</name>
        <dbReference type="ChEBI" id="CHEBI:37565"/>
    </ligand>
</feature>
<feature type="binding site" evidence="1">
    <location>
        <begin position="136"/>
        <end position="139"/>
    </location>
    <ligand>
        <name>GTP</name>
        <dbReference type="ChEBI" id="CHEBI:37565"/>
    </ligand>
</feature>
<gene>
    <name evidence="1" type="primary">lepA</name>
    <name type="ordered locus">HPSH_01835</name>
</gene>
<name>LEPA_HELPS</name>
<dbReference type="EC" id="3.6.5.n1" evidence="1"/>
<dbReference type="EMBL" id="CP001072">
    <property type="protein sequence ID" value="ACD47817.1"/>
    <property type="molecule type" value="Genomic_DNA"/>
</dbReference>
<dbReference type="SMR" id="B2USI5"/>
<dbReference type="KEGG" id="hps:HPSH_01835"/>
<dbReference type="HOGENOM" id="CLU_009995_3_3_7"/>
<dbReference type="GO" id="GO:0005886">
    <property type="term" value="C:plasma membrane"/>
    <property type="evidence" value="ECO:0007669"/>
    <property type="project" value="UniProtKB-SubCell"/>
</dbReference>
<dbReference type="GO" id="GO:0005525">
    <property type="term" value="F:GTP binding"/>
    <property type="evidence" value="ECO:0007669"/>
    <property type="project" value="UniProtKB-UniRule"/>
</dbReference>
<dbReference type="GO" id="GO:0003924">
    <property type="term" value="F:GTPase activity"/>
    <property type="evidence" value="ECO:0007669"/>
    <property type="project" value="UniProtKB-UniRule"/>
</dbReference>
<dbReference type="GO" id="GO:0043022">
    <property type="term" value="F:ribosome binding"/>
    <property type="evidence" value="ECO:0007669"/>
    <property type="project" value="UniProtKB-UniRule"/>
</dbReference>
<dbReference type="GO" id="GO:0003746">
    <property type="term" value="F:translation elongation factor activity"/>
    <property type="evidence" value="ECO:0007669"/>
    <property type="project" value="UniProtKB-UniRule"/>
</dbReference>
<dbReference type="GO" id="GO:0045727">
    <property type="term" value="P:positive regulation of translation"/>
    <property type="evidence" value="ECO:0007669"/>
    <property type="project" value="UniProtKB-UniRule"/>
</dbReference>
<dbReference type="CDD" id="cd03699">
    <property type="entry name" value="EF4_II"/>
    <property type="match status" value="1"/>
</dbReference>
<dbReference type="CDD" id="cd16260">
    <property type="entry name" value="EF4_III"/>
    <property type="match status" value="1"/>
</dbReference>
<dbReference type="CDD" id="cd01890">
    <property type="entry name" value="LepA"/>
    <property type="match status" value="1"/>
</dbReference>
<dbReference type="CDD" id="cd03709">
    <property type="entry name" value="lepA_C"/>
    <property type="match status" value="1"/>
</dbReference>
<dbReference type="FunFam" id="3.40.50.300:FF:000078">
    <property type="entry name" value="Elongation factor 4"/>
    <property type="match status" value="1"/>
</dbReference>
<dbReference type="FunFam" id="3.30.70.240:FF:000007">
    <property type="entry name" value="Translation factor GUF1, mitochondrial"/>
    <property type="match status" value="1"/>
</dbReference>
<dbReference type="FunFam" id="3.30.70.2570:FF:000001">
    <property type="entry name" value="Translation factor GUF1, mitochondrial"/>
    <property type="match status" value="1"/>
</dbReference>
<dbReference type="FunFam" id="3.30.70.870:FF:000004">
    <property type="entry name" value="Translation factor GUF1, mitochondrial"/>
    <property type="match status" value="1"/>
</dbReference>
<dbReference type="Gene3D" id="3.30.70.240">
    <property type="match status" value="1"/>
</dbReference>
<dbReference type="Gene3D" id="3.30.70.2570">
    <property type="entry name" value="Elongation factor 4, C-terminal domain"/>
    <property type="match status" value="1"/>
</dbReference>
<dbReference type="Gene3D" id="3.30.70.870">
    <property type="entry name" value="Elongation Factor G (Translational Gtpase), domain 3"/>
    <property type="match status" value="1"/>
</dbReference>
<dbReference type="Gene3D" id="3.40.50.300">
    <property type="entry name" value="P-loop containing nucleotide triphosphate hydrolases"/>
    <property type="match status" value="1"/>
</dbReference>
<dbReference type="Gene3D" id="2.40.30.10">
    <property type="entry name" value="Translation factors"/>
    <property type="match status" value="1"/>
</dbReference>
<dbReference type="HAMAP" id="MF_00071">
    <property type="entry name" value="LepA"/>
    <property type="match status" value="1"/>
</dbReference>
<dbReference type="InterPro" id="IPR006297">
    <property type="entry name" value="EF-4"/>
</dbReference>
<dbReference type="InterPro" id="IPR035647">
    <property type="entry name" value="EFG_III/V"/>
</dbReference>
<dbReference type="InterPro" id="IPR000640">
    <property type="entry name" value="EFG_V-like"/>
</dbReference>
<dbReference type="InterPro" id="IPR004161">
    <property type="entry name" value="EFTu-like_2"/>
</dbReference>
<dbReference type="InterPro" id="IPR031157">
    <property type="entry name" value="G_TR_CS"/>
</dbReference>
<dbReference type="InterPro" id="IPR038363">
    <property type="entry name" value="LepA_C_sf"/>
</dbReference>
<dbReference type="InterPro" id="IPR013842">
    <property type="entry name" value="LepA_CTD"/>
</dbReference>
<dbReference type="InterPro" id="IPR035654">
    <property type="entry name" value="LepA_IV"/>
</dbReference>
<dbReference type="InterPro" id="IPR027417">
    <property type="entry name" value="P-loop_NTPase"/>
</dbReference>
<dbReference type="InterPro" id="IPR005225">
    <property type="entry name" value="Small_GTP-bd"/>
</dbReference>
<dbReference type="InterPro" id="IPR000795">
    <property type="entry name" value="T_Tr_GTP-bd_dom"/>
</dbReference>
<dbReference type="InterPro" id="IPR009000">
    <property type="entry name" value="Transl_B-barrel_sf"/>
</dbReference>
<dbReference type="NCBIfam" id="TIGR01393">
    <property type="entry name" value="lepA"/>
    <property type="match status" value="1"/>
</dbReference>
<dbReference type="NCBIfam" id="TIGR00231">
    <property type="entry name" value="small_GTP"/>
    <property type="match status" value="1"/>
</dbReference>
<dbReference type="PANTHER" id="PTHR43512:SF4">
    <property type="entry name" value="TRANSLATION FACTOR GUF1 HOMOLOG, CHLOROPLASTIC"/>
    <property type="match status" value="1"/>
</dbReference>
<dbReference type="PANTHER" id="PTHR43512">
    <property type="entry name" value="TRANSLATION FACTOR GUF1-RELATED"/>
    <property type="match status" value="1"/>
</dbReference>
<dbReference type="Pfam" id="PF00679">
    <property type="entry name" value="EFG_C"/>
    <property type="match status" value="1"/>
</dbReference>
<dbReference type="Pfam" id="PF00009">
    <property type="entry name" value="GTP_EFTU"/>
    <property type="match status" value="1"/>
</dbReference>
<dbReference type="Pfam" id="PF03144">
    <property type="entry name" value="GTP_EFTU_D2"/>
    <property type="match status" value="1"/>
</dbReference>
<dbReference type="Pfam" id="PF06421">
    <property type="entry name" value="LepA_C"/>
    <property type="match status" value="1"/>
</dbReference>
<dbReference type="PRINTS" id="PR00315">
    <property type="entry name" value="ELONGATNFCT"/>
</dbReference>
<dbReference type="SUPFAM" id="SSF54980">
    <property type="entry name" value="EF-G C-terminal domain-like"/>
    <property type="match status" value="2"/>
</dbReference>
<dbReference type="SUPFAM" id="SSF52540">
    <property type="entry name" value="P-loop containing nucleoside triphosphate hydrolases"/>
    <property type="match status" value="1"/>
</dbReference>
<dbReference type="SUPFAM" id="SSF50447">
    <property type="entry name" value="Translation proteins"/>
    <property type="match status" value="1"/>
</dbReference>
<dbReference type="PROSITE" id="PS00301">
    <property type="entry name" value="G_TR_1"/>
    <property type="match status" value="1"/>
</dbReference>
<dbReference type="PROSITE" id="PS51722">
    <property type="entry name" value="G_TR_2"/>
    <property type="match status" value="1"/>
</dbReference>
<sequence>MKSKVPMKNIRNFSIIAHIDHGKSTLADCLIAECNAISNREMTSQVMDTMDIEKERGITIKAQSVRLNYTLKGEDYVLNLIDTPGHVDFSYEVSRSLCSCEGALLVVDATQGVEAQTIANVYIALDNNLEILPVINKIDLPNANVLEVKQDIEDTIGIDCSNANEVSAKARLGIKDLLEKIITTIPAPSGDFNAPLKALIYDSWFDNYLGALALVRIMDGSINTEQEILVMGTGKKHGVLGLYYPNPLKKIPTKSLECGEIGIVSLGLKSVTDIAVGDTLTDAKNPTPKPIEGFMPAKPFVFAGLYPIETDRFEDLREALLKLQLNDCALNFEPESSVALGFGFRVGFLGLLHMEVIKERLEREFGLNLIATAPTVVYEVHLTDNSIKYVQNPSELPPENHIACIKEPFVRATIITPSEFLGNLMQLLNNKRGIQEKMEYLNQSRVMLTYSLPSNEIVMDFYDKLKSCTKGYASFDYEPIENREAHLVKLDVRVAGDVVDALSIIIDKNKAYEKGRALVETMKELIPRQLFEVAIQASVGNKIIARETIKSVGKNVTAKCYGGDITRKRKLLEKQKEGKKRMKAIGKVELPQEAFLAILKID</sequence>
<organism>
    <name type="scientific">Helicobacter pylori (strain Shi470)</name>
    <dbReference type="NCBI Taxonomy" id="512562"/>
    <lineage>
        <taxon>Bacteria</taxon>
        <taxon>Pseudomonadati</taxon>
        <taxon>Campylobacterota</taxon>
        <taxon>Epsilonproteobacteria</taxon>
        <taxon>Campylobacterales</taxon>
        <taxon>Helicobacteraceae</taxon>
        <taxon>Helicobacter</taxon>
    </lineage>
</organism>
<accession>B2USI5</accession>
<comment type="function">
    <text evidence="1">Required for accurate and efficient protein synthesis under certain stress conditions. May act as a fidelity factor of the translation reaction, by catalyzing a one-codon backward translocation of tRNAs on improperly translocated ribosomes. Back-translocation proceeds from a post-translocation (POST) complex to a pre-translocation (PRE) complex, thus giving elongation factor G a second chance to translocate the tRNAs correctly. Binds to ribosomes in a GTP-dependent manner.</text>
</comment>
<comment type="catalytic activity">
    <reaction evidence="1">
        <text>GTP + H2O = GDP + phosphate + H(+)</text>
        <dbReference type="Rhea" id="RHEA:19669"/>
        <dbReference type="ChEBI" id="CHEBI:15377"/>
        <dbReference type="ChEBI" id="CHEBI:15378"/>
        <dbReference type="ChEBI" id="CHEBI:37565"/>
        <dbReference type="ChEBI" id="CHEBI:43474"/>
        <dbReference type="ChEBI" id="CHEBI:58189"/>
        <dbReference type="EC" id="3.6.5.n1"/>
    </reaction>
</comment>
<comment type="subcellular location">
    <subcellularLocation>
        <location evidence="1">Cell inner membrane</location>
        <topology evidence="1">Peripheral membrane protein</topology>
        <orientation evidence="1">Cytoplasmic side</orientation>
    </subcellularLocation>
</comment>
<comment type="similarity">
    <text evidence="1">Belongs to the TRAFAC class translation factor GTPase superfamily. Classic translation factor GTPase family. LepA subfamily.</text>
</comment>
<protein>
    <recommendedName>
        <fullName evidence="1">Elongation factor 4</fullName>
        <shortName evidence="1">EF-4</shortName>
        <ecNumber evidence="1">3.6.5.n1</ecNumber>
    </recommendedName>
    <alternativeName>
        <fullName evidence="1">Ribosomal back-translocase LepA</fullName>
    </alternativeName>
</protein>